<proteinExistence type="evidence at transcript level"/>
<organism>
    <name type="scientific">Sarcophaga bullata</name>
    <name type="common">Grey flesh fly</name>
    <name type="synonym">Neobellieria bullata</name>
    <dbReference type="NCBI Taxonomy" id="7385"/>
    <lineage>
        <taxon>Eukaryota</taxon>
        <taxon>Metazoa</taxon>
        <taxon>Ecdysozoa</taxon>
        <taxon>Arthropoda</taxon>
        <taxon>Hexapoda</taxon>
        <taxon>Insecta</taxon>
        <taxon>Pterygota</taxon>
        <taxon>Neoptera</taxon>
        <taxon>Endopterygota</taxon>
        <taxon>Diptera</taxon>
        <taxon>Brachycera</taxon>
        <taxon>Muscomorpha</taxon>
        <taxon>Oestroidea</taxon>
        <taxon>Sarcophagidae</taxon>
        <taxon>Sarcophaga</taxon>
        <taxon>Neobellieria</taxon>
    </lineage>
</organism>
<comment type="function">
    <text evidence="1">Cytosolic glucose-6-phosphate dehydrogenase that catalyzes the first and rate-limiting step of the oxidative branch within the pentose phosphate pathway/shunt, an alternative route to glycolysis for the dissimilation of carbohydrates and a major source of reducing power and metabolic intermediates for fatty acid and nucleic acid biosynthetic processes.</text>
</comment>
<comment type="catalytic activity">
    <reaction evidence="1">
        <text>D-glucose 6-phosphate + NADP(+) = 6-phospho-D-glucono-1,5-lactone + NADPH + H(+)</text>
        <dbReference type="Rhea" id="RHEA:15841"/>
        <dbReference type="ChEBI" id="CHEBI:15378"/>
        <dbReference type="ChEBI" id="CHEBI:57783"/>
        <dbReference type="ChEBI" id="CHEBI:57955"/>
        <dbReference type="ChEBI" id="CHEBI:58349"/>
        <dbReference type="ChEBI" id="CHEBI:61548"/>
        <dbReference type="EC" id="1.1.1.49"/>
    </reaction>
    <physiologicalReaction direction="left-to-right" evidence="1">
        <dbReference type="Rhea" id="RHEA:15842"/>
    </physiologicalReaction>
</comment>
<comment type="pathway">
    <text evidence="1">Carbohydrate degradation; pentose phosphate pathway; D-ribulose 5-phosphate from D-glucose 6-phosphate (oxidative stage): step 1/3.</text>
</comment>
<comment type="subcellular location">
    <subcellularLocation>
        <location evidence="1">Cytoplasm</location>
        <location evidence="1">Cytosol</location>
    </subcellularLocation>
</comment>
<comment type="similarity">
    <text evidence="2">Belongs to the glucose-6-phosphate dehydrogenase family.</text>
</comment>
<keyword id="KW-0119">Carbohydrate metabolism</keyword>
<keyword id="KW-0963">Cytoplasm</keyword>
<keyword id="KW-0313">Glucose metabolism</keyword>
<keyword id="KW-0521">NADP</keyword>
<keyword id="KW-0560">Oxidoreductase</keyword>
<gene>
    <name type="primary">ZW</name>
</gene>
<accession>Q25537</accession>
<evidence type="ECO:0000250" key="1">
    <source>
        <dbReference type="UniProtKB" id="P11413"/>
    </source>
</evidence>
<evidence type="ECO:0000305" key="2"/>
<dbReference type="EC" id="1.1.1.49" evidence="1"/>
<dbReference type="EMBL" id="U09037">
    <property type="protein sequence ID" value="AAB02781.1"/>
    <property type="molecule type" value="mRNA"/>
</dbReference>
<dbReference type="SMR" id="Q25537"/>
<dbReference type="UniPathway" id="UPA00115">
    <property type="reaction ID" value="UER00408"/>
</dbReference>
<dbReference type="GO" id="GO:0005829">
    <property type="term" value="C:cytosol"/>
    <property type="evidence" value="ECO:0007669"/>
    <property type="project" value="UniProtKB-SubCell"/>
</dbReference>
<dbReference type="GO" id="GO:0004345">
    <property type="term" value="F:glucose-6-phosphate dehydrogenase activity"/>
    <property type="evidence" value="ECO:0007669"/>
    <property type="project" value="UniProtKB-EC"/>
</dbReference>
<dbReference type="GO" id="GO:0050661">
    <property type="term" value="F:NADP binding"/>
    <property type="evidence" value="ECO:0007669"/>
    <property type="project" value="InterPro"/>
</dbReference>
<dbReference type="GO" id="GO:0006006">
    <property type="term" value="P:glucose metabolic process"/>
    <property type="evidence" value="ECO:0007669"/>
    <property type="project" value="UniProtKB-KW"/>
</dbReference>
<dbReference type="GO" id="GO:0009051">
    <property type="term" value="P:pentose-phosphate shunt, oxidative branch"/>
    <property type="evidence" value="ECO:0007669"/>
    <property type="project" value="TreeGrafter"/>
</dbReference>
<dbReference type="FunFam" id="3.40.50.720:FF:000111">
    <property type="entry name" value="Glucose-6-phosphate 1-dehydrogenase"/>
    <property type="match status" value="1"/>
</dbReference>
<dbReference type="Gene3D" id="3.40.50.720">
    <property type="entry name" value="NAD(P)-binding Rossmann-like Domain"/>
    <property type="match status" value="1"/>
</dbReference>
<dbReference type="InterPro" id="IPR001282">
    <property type="entry name" value="G6P_DH"/>
</dbReference>
<dbReference type="InterPro" id="IPR022674">
    <property type="entry name" value="G6P_DH_NAD-bd"/>
</dbReference>
<dbReference type="InterPro" id="IPR036291">
    <property type="entry name" value="NAD(P)-bd_dom_sf"/>
</dbReference>
<dbReference type="PANTHER" id="PTHR23429:SF0">
    <property type="entry name" value="GLUCOSE-6-PHOSPHATE 1-DEHYDROGENASE"/>
    <property type="match status" value="1"/>
</dbReference>
<dbReference type="PANTHER" id="PTHR23429">
    <property type="entry name" value="GLUCOSE-6-PHOSPHATE 1-DEHYDROGENASE G6PD"/>
    <property type="match status" value="1"/>
</dbReference>
<dbReference type="Pfam" id="PF00479">
    <property type="entry name" value="G6PD_N"/>
    <property type="match status" value="1"/>
</dbReference>
<dbReference type="PRINTS" id="PR00079">
    <property type="entry name" value="G6PDHDRGNASE"/>
</dbReference>
<dbReference type="SUPFAM" id="SSF51735">
    <property type="entry name" value="NAD(P)-binding Rossmann-fold domains"/>
    <property type="match status" value="1"/>
</dbReference>
<name>G6PD_SARBU</name>
<sequence length="153" mass="18158">LWWLYRDNLLPKPTKFCGYARSKLTTADIRKACEKFMKVQPHEQQRYEEFWELNHYVSGSYDGRLGFEMLQQQMEIMENKGVANRVFYLALPPSVFNSVTVRIKEICLSKKGWNRVIIEKPFGRDDVTSKQLSDHLASLFDEEQIYRIDHYLG</sequence>
<protein>
    <recommendedName>
        <fullName>Glucose-6-phosphate 1-dehydrogenase</fullName>
        <shortName>G6PD</shortName>
        <ecNumber evidence="1">1.1.1.49</ecNumber>
    </recommendedName>
    <alternativeName>
        <fullName>Zwischenferment</fullName>
    </alternativeName>
</protein>
<reference key="1">
    <citation type="journal article" date="1994" name="Ann. Entomol. Soc. Am.">
        <title>Phylogenetic utility of partial DNA sequences of G6PDH at different taxonomic levels in Hexapoda with emphasis on Diptera.</title>
        <authorList>
            <person name="Soto-Adames F.N."/>
            <person name="Robertson H.M."/>
            <person name="Berlocher S.H."/>
        </authorList>
        <dbReference type="AGRICOLA" id="IND20440286"/>
    </citation>
    <scope>NUCLEOTIDE SEQUENCE [MRNA]</scope>
</reference>
<feature type="chain" id="PRO_0000068096" description="Glucose-6-phosphate 1-dehydrogenase">
    <location>
        <begin position="1" status="less than"/>
        <end position="153" status="greater than"/>
    </location>
</feature>
<feature type="binding site" evidence="1">
    <location>
        <position position="21"/>
    </location>
    <ligand>
        <name>NADP(+)</name>
        <dbReference type="ChEBI" id="CHEBI:58349"/>
        <label>1</label>
    </ligand>
</feature>
<feature type="binding site" evidence="1">
    <location>
        <position position="120"/>
    </location>
    <ligand>
        <name>D-glucose 6-phosphate</name>
        <dbReference type="ChEBI" id="CHEBI:61548"/>
    </ligand>
</feature>
<feature type="binding site" evidence="1">
    <location>
        <position position="120"/>
    </location>
    <ligand>
        <name>NADP(+)</name>
        <dbReference type="ChEBI" id="CHEBI:58349"/>
        <label>1</label>
    </ligand>
</feature>
<feature type="non-terminal residue">
    <location>
        <position position="1"/>
    </location>
</feature>
<feature type="non-terminal residue">
    <location>
        <position position="153"/>
    </location>
</feature>